<dbReference type="EMBL" id="AF198100">
    <property type="protein sequence ID" value="AAF44567.1"/>
    <property type="molecule type" value="Genomic_DNA"/>
</dbReference>
<dbReference type="RefSeq" id="NP_039186.1">
    <property type="nucleotide sequence ID" value="NC_002188.1"/>
</dbReference>
<dbReference type="SMR" id="Q9J512"/>
<dbReference type="GeneID" id="1486795"/>
<dbReference type="KEGG" id="vg:1486795"/>
<dbReference type="Proteomes" id="UP000008597">
    <property type="component" value="Segment"/>
</dbReference>
<dbReference type="Gene3D" id="1.25.40.20">
    <property type="entry name" value="Ankyrin repeat-containing domain"/>
    <property type="match status" value="2"/>
</dbReference>
<dbReference type="InterPro" id="IPR002110">
    <property type="entry name" value="Ankyrin_rpt"/>
</dbReference>
<dbReference type="InterPro" id="IPR036770">
    <property type="entry name" value="Ankyrin_rpt-contain_sf"/>
</dbReference>
<dbReference type="PANTHER" id="PTHR24198">
    <property type="entry name" value="ANKYRIN REPEAT AND PROTEIN KINASE DOMAIN-CONTAINING PROTEIN"/>
    <property type="match status" value="1"/>
</dbReference>
<dbReference type="PANTHER" id="PTHR24198:SF165">
    <property type="entry name" value="ANKYRIN REPEAT-CONTAINING PROTEIN-RELATED"/>
    <property type="match status" value="1"/>
</dbReference>
<dbReference type="Pfam" id="PF12796">
    <property type="entry name" value="Ank_2"/>
    <property type="match status" value="1"/>
</dbReference>
<dbReference type="Pfam" id="PF13637">
    <property type="entry name" value="Ank_4"/>
    <property type="match status" value="1"/>
</dbReference>
<dbReference type="SMART" id="SM00248">
    <property type="entry name" value="ANK"/>
    <property type="match status" value="4"/>
</dbReference>
<dbReference type="SUPFAM" id="SSF48403">
    <property type="entry name" value="Ankyrin repeat"/>
    <property type="match status" value="1"/>
</dbReference>
<dbReference type="PROSITE" id="PS50297">
    <property type="entry name" value="ANK_REP_REGION"/>
    <property type="match status" value="1"/>
</dbReference>
<dbReference type="PROSITE" id="PS50088">
    <property type="entry name" value="ANK_REPEAT"/>
    <property type="match status" value="3"/>
</dbReference>
<accession>Q9J512</accession>
<proteinExistence type="predicted"/>
<organismHost>
    <name type="scientific">Vertebrata</name>
    <dbReference type="NCBI Taxonomy" id="7742"/>
</organismHost>
<reference key="1">
    <citation type="journal article" date="2000" name="J. Virol.">
        <title>The genome of fowlpox virus.</title>
        <authorList>
            <person name="Afonso C.L."/>
            <person name="Tulman E.R."/>
            <person name="Lu Z."/>
            <person name="Zsak L."/>
            <person name="Kutish G.F."/>
            <person name="Rock D.L."/>
        </authorList>
    </citation>
    <scope>NUCLEOTIDE SEQUENCE [LARGE SCALE GENOMIC DNA]</scope>
</reference>
<organism>
    <name type="scientific">Fowlpox virus (strain NVSL)</name>
    <name type="common">FPV</name>
    <dbReference type="NCBI Taxonomy" id="928301"/>
    <lineage>
        <taxon>Viruses</taxon>
        <taxon>Varidnaviria</taxon>
        <taxon>Bamfordvirae</taxon>
        <taxon>Nucleocytoviricota</taxon>
        <taxon>Pokkesviricetes</taxon>
        <taxon>Chitovirales</taxon>
        <taxon>Poxviridae</taxon>
        <taxon>Chordopoxvirinae</taxon>
        <taxon>Avipoxvirus</taxon>
        <taxon>Fowlpox virus</taxon>
    </lineage>
</organism>
<protein>
    <recommendedName>
        <fullName>Putative ankyrin repeat protein FPV223</fullName>
    </recommendedName>
</protein>
<name>V223_FOWPN</name>
<feature type="chain" id="PRO_0000067117" description="Putative ankyrin repeat protein FPV223">
    <location>
        <begin position="1"/>
        <end position="141"/>
    </location>
</feature>
<feature type="repeat" description="ANK 1">
    <location>
        <begin position="21"/>
        <end position="50"/>
    </location>
</feature>
<feature type="repeat" description="ANK 2">
    <location>
        <begin position="54"/>
        <end position="83"/>
    </location>
</feature>
<feature type="repeat" description="ANK 3">
    <location>
        <begin position="85"/>
        <end position="114"/>
    </location>
</feature>
<feature type="repeat" description="ANK 4">
    <location>
        <begin position="118"/>
        <end position="140"/>
    </location>
</feature>
<sequence length="141" mass="16075">MNVLKLLCKYHVDINISSHSSGRTSLHYAVLFNHKRALSFLLARGADVFKKDACMCTPLYYAMLSDQRDMVTMLLHSKKYIVKFRNKLDLHNAIETGNIKVIKTLLDNGVNENSVDKDGLTPLHYAVKYGNISIVKMFVIR</sequence>
<gene>
    <name type="ordered locus">FPV223</name>
</gene>
<keyword id="KW-0040">ANK repeat</keyword>
<keyword id="KW-1185">Reference proteome</keyword>
<keyword id="KW-0677">Repeat</keyword>